<name>GYP2_EMENI</name>
<proteinExistence type="predicted"/>
<gene>
    <name type="ORF">AN11010</name>
    <name type="ORF">AN7784</name>
</gene>
<sequence>MMQWTSLVQKAQSFIDPANFTIPNLTSSSDRNPSKSSLFRQQFRLPDSQNPLQEITAELILPVSHTSSSASGAQSKNIDRGGNRYAGRLHLSERFLCFSTQPTSFLPSATLATSTYWAGQTNGTGPSGNGFTIPLCSIRRVERLNSQSHIFSLALTTWNGALGKQQAPGFTPQRFTIELVGSRQACERFCDGLKKNLRESMKEIENLRLVVNDCYSEYLLSGAKSKAQSADDPEARPPPDAGLGMLFRYPGDARKLRDRSKMRLWGEYFRENGRNATLIRQPTFHKLIRVGLPNRLRGEIWEVASGSLNLRLRSPKLYEQTLAKFEGQESLAIDEIEKDLNRSLPEYAGFQSEEGIGRLRRVLTAYSWTNAEIGYCQAMNIVVAALLIYMSEAQAFFLLSVLCDRLVPGYYSTTMYGTLLDQKVFESLVEKTMPILWDHLNKSDVQLSVVSLPWFLSLYINSMPLVFAFRVLDVFFLEGPKVLFQVGLAILRINGEELLDVQDDGSFISVLKSYFSRLDESAHPRSENPKLRAITRFQELMVVAFKEFSQITHQTITEQREKHKDAVLENIESFAKRTSIRNLGPESKKLSSDDLGAIYDRYYEVLYDYQQRQKVIEEEKKRQERKKSQRVSVIGPSVDREVGRVGLGPSPTHMDYNAFREFLAATAKWAIADSPGPSRKQSDSGSFRGLGRPTMNKRPSPADHEFMQRLFRKWSTDPDDGLSLQDVVNGIARLKGPRDIMNNITYFFDLYDDNGDGKVDREGILRMSEALLFLSRRGFDGTITPSQSTENLMPGKEEDKLSTGERFLGSVSSFIRRCFEYADPTKKTLEAEKLAETTDNLNSFSIGDDEEDLIDVGDDEVKSESTPSPEGETPGTPSLEPTERKRARSTSEAANPALDPNNPLHITLPTFRMVVLADELLEQFFDNYFPQSFHLSEQGAAAAQLPSLSSNLTTFSNIGAAKQQPTSSGPTVAGASGGIVPPNRGLRGVLDNIVTDGIRMAAEVKKRMDEAQRELERNALNRDDDDEDDEDDDGHHGTAPAIVGGISSWGAGAYGADPERRSVRETDRDLLEGAEVVNIRGKDDVSLLDDKDSHQESSSGQRTAAGSDDKVVSKVVEFES</sequence>
<accession>C8VDQ4</accession>
<accession>Q5AV96</accession>
<reference key="1">
    <citation type="journal article" date="2005" name="Nature">
        <title>Sequencing of Aspergillus nidulans and comparative analysis with A. fumigatus and A. oryzae.</title>
        <authorList>
            <person name="Galagan J.E."/>
            <person name="Calvo S.E."/>
            <person name="Cuomo C."/>
            <person name="Ma L.-J."/>
            <person name="Wortman J.R."/>
            <person name="Batzoglou S."/>
            <person name="Lee S.-I."/>
            <person name="Bastuerkmen M."/>
            <person name="Spevak C.C."/>
            <person name="Clutterbuck J."/>
            <person name="Kapitonov V."/>
            <person name="Jurka J."/>
            <person name="Scazzocchio C."/>
            <person name="Farman M.L."/>
            <person name="Butler J."/>
            <person name="Purcell S."/>
            <person name="Harris S."/>
            <person name="Braus G.H."/>
            <person name="Draht O."/>
            <person name="Busch S."/>
            <person name="D'Enfert C."/>
            <person name="Bouchier C."/>
            <person name="Goldman G.H."/>
            <person name="Bell-Pedersen D."/>
            <person name="Griffiths-Jones S."/>
            <person name="Doonan J.H."/>
            <person name="Yu J."/>
            <person name="Vienken K."/>
            <person name="Pain A."/>
            <person name="Freitag M."/>
            <person name="Selker E.U."/>
            <person name="Archer D.B."/>
            <person name="Penalva M.A."/>
            <person name="Oakley B.R."/>
            <person name="Momany M."/>
            <person name="Tanaka T."/>
            <person name="Kumagai T."/>
            <person name="Asai K."/>
            <person name="Machida M."/>
            <person name="Nierman W.C."/>
            <person name="Denning D.W."/>
            <person name="Caddick M.X."/>
            <person name="Hynes M."/>
            <person name="Paoletti M."/>
            <person name="Fischer R."/>
            <person name="Miller B.L."/>
            <person name="Dyer P.S."/>
            <person name="Sachs M.S."/>
            <person name="Osmani S.A."/>
            <person name="Birren B.W."/>
        </authorList>
    </citation>
    <scope>NUCLEOTIDE SEQUENCE [LARGE SCALE GENOMIC DNA]</scope>
    <source>
        <strain>FGSC A4 / ATCC 38163 / CBS 112.46 / NRRL 194 / M139</strain>
    </source>
</reference>
<reference key="2">
    <citation type="journal article" date="2009" name="Fungal Genet. Biol.">
        <title>The 2008 update of the Aspergillus nidulans genome annotation: a community effort.</title>
        <authorList>
            <person name="Wortman J.R."/>
            <person name="Gilsenan J.M."/>
            <person name="Joardar V."/>
            <person name="Deegan J."/>
            <person name="Clutterbuck J."/>
            <person name="Andersen M.R."/>
            <person name="Archer D."/>
            <person name="Bencina M."/>
            <person name="Braus G."/>
            <person name="Coutinho P."/>
            <person name="von Dohren H."/>
            <person name="Doonan J."/>
            <person name="Driessen A.J."/>
            <person name="Durek P."/>
            <person name="Espeso E."/>
            <person name="Fekete E."/>
            <person name="Flipphi M."/>
            <person name="Estrada C.G."/>
            <person name="Geysens S."/>
            <person name="Goldman G."/>
            <person name="de Groot P.W."/>
            <person name="Hansen K."/>
            <person name="Harris S.D."/>
            <person name="Heinekamp T."/>
            <person name="Helmstaedt K."/>
            <person name="Henrissat B."/>
            <person name="Hofmann G."/>
            <person name="Homan T."/>
            <person name="Horio T."/>
            <person name="Horiuchi H."/>
            <person name="James S."/>
            <person name="Jones M."/>
            <person name="Karaffa L."/>
            <person name="Karanyi Z."/>
            <person name="Kato M."/>
            <person name="Keller N."/>
            <person name="Kelly D.E."/>
            <person name="Kiel J.A."/>
            <person name="Kim J.M."/>
            <person name="van der Klei I.J."/>
            <person name="Klis F.M."/>
            <person name="Kovalchuk A."/>
            <person name="Krasevec N."/>
            <person name="Kubicek C.P."/>
            <person name="Liu B."/>
            <person name="Maccabe A."/>
            <person name="Meyer V."/>
            <person name="Mirabito P."/>
            <person name="Miskei M."/>
            <person name="Mos M."/>
            <person name="Mullins J."/>
            <person name="Nelson D.R."/>
            <person name="Nielsen J."/>
            <person name="Oakley B.R."/>
            <person name="Osmani S.A."/>
            <person name="Pakula T."/>
            <person name="Paszewski A."/>
            <person name="Paulsen I."/>
            <person name="Pilsyk S."/>
            <person name="Pocsi I."/>
            <person name="Punt P.J."/>
            <person name="Ram A.F."/>
            <person name="Ren Q."/>
            <person name="Robellet X."/>
            <person name="Robson G."/>
            <person name="Seiboth B."/>
            <person name="van Solingen P."/>
            <person name="Specht T."/>
            <person name="Sun J."/>
            <person name="Taheri-Talesh N."/>
            <person name="Takeshita N."/>
            <person name="Ussery D."/>
            <person name="vanKuyk P.A."/>
            <person name="Visser H."/>
            <person name="van de Vondervoort P.J."/>
            <person name="de Vries R.P."/>
            <person name="Walton J."/>
            <person name="Xiang X."/>
            <person name="Xiong Y."/>
            <person name="Zeng A.P."/>
            <person name="Brandt B.W."/>
            <person name="Cornell M.J."/>
            <person name="van den Hondel C.A."/>
            <person name="Visser J."/>
            <person name="Oliver S.G."/>
            <person name="Turner G."/>
        </authorList>
    </citation>
    <scope>GENOME REANNOTATION</scope>
    <source>
        <strain>FGSC A4 / ATCC 38163 / CBS 112.46 / NRRL 194 / M139</strain>
    </source>
</reference>
<evidence type="ECO:0000255" key="1">
    <source>
        <dbReference type="PROSITE-ProRule" id="PRU00163"/>
    </source>
</evidence>
<evidence type="ECO:0000256" key="2">
    <source>
        <dbReference type="SAM" id="MobiDB-lite"/>
    </source>
</evidence>
<evidence type="ECO:0000305" key="3"/>
<organism>
    <name type="scientific">Emericella nidulans (strain FGSC A4 / ATCC 38163 / CBS 112.46 / NRRL 194 / M139)</name>
    <name type="common">Aspergillus nidulans</name>
    <dbReference type="NCBI Taxonomy" id="227321"/>
    <lineage>
        <taxon>Eukaryota</taxon>
        <taxon>Fungi</taxon>
        <taxon>Dikarya</taxon>
        <taxon>Ascomycota</taxon>
        <taxon>Pezizomycotina</taxon>
        <taxon>Eurotiomycetes</taxon>
        <taxon>Eurotiomycetidae</taxon>
        <taxon>Eurotiales</taxon>
        <taxon>Aspergillaceae</taxon>
        <taxon>Aspergillus</taxon>
        <taxon>Aspergillus subgen. Nidulantes</taxon>
    </lineage>
</organism>
<keyword id="KW-1185">Reference proteome</keyword>
<comment type="sequence caution" evidence="3">
    <conflict type="erroneous gene model prediction">
        <sequence resource="EMBL-CDS" id="EAA61572"/>
    </conflict>
</comment>
<feature type="chain" id="PRO_0000406151" description="Putative GTPase-activating protein AN11010">
    <location>
        <begin position="1"/>
        <end position="1120"/>
    </location>
</feature>
<feature type="domain" description="Rab-GAP TBC" evidence="1">
    <location>
        <begin position="291"/>
        <end position="479"/>
    </location>
</feature>
<feature type="region of interest" description="Disordered" evidence="2">
    <location>
        <begin position="673"/>
        <end position="702"/>
    </location>
</feature>
<feature type="region of interest" description="Disordered" evidence="2">
    <location>
        <begin position="859"/>
        <end position="903"/>
    </location>
</feature>
<feature type="region of interest" description="Disordered" evidence="2">
    <location>
        <begin position="960"/>
        <end position="979"/>
    </location>
</feature>
<feature type="region of interest" description="Disordered" evidence="2">
    <location>
        <begin position="1017"/>
        <end position="1068"/>
    </location>
</feature>
<feature type="region of interest" description="Disordered" evidence="2">
    <location>
        <begin position="1081"/>
        <end position="1120"/>
    </location>
</feature>
<feature type="compositionally biased region" description="Low complexity" evidence="2">
    <location>
        <begin position="864"/>
        <end position="878"/>
    </location>
</feature>
<feature type="compositionally biased region" description="Polar residues" evidence="2">
    <location>
        <begin position="960"/>
        <end position="970"/>
    </location>
</feature>
<feature type="compositionally biased region" description="Acidic residues" evidence="2">
    <location>
        <begin position="1023"/>
        <end position="1032"/>
    </location>
</feature>
<feature type="compositionally biased region" description="Basic and acidic residues" evidence="2">
    <location>
        <begin position="1057"/>
        <end position="1068"/>
    </location>
</feature>
<feature type="compositionally biased region" description="Basic and acidic residues" evidence="2">
    <location>
        <begin position="1081"/>
        <end position="1095"/>
    </location>
</feature>
<dbReference type="EMBL" id="AACD01000132">
    <property type="protein sequence ID" value="EAA61572.1"/>
    <property type="status" value="ALT_SEQ"/>
    <property type="molecule type" value="Genomic_DNA"/>
</dbReference>
<dbReference type="EMBL" id="BN001304">
    <property type="protein sequence ID" value="CBF80101.1"/>
    <property type="molecule type" value="Genomic_DNA"/>
</dbReference>
<dbReference type="RefSeq" id="XP_681053.1">
    <property type="nucleotide sequence ID" value="XM_675961.1"/>
</dbReference>
<dbReference type="SMR" id="C8VDQ4"/>
<dbReference type="FunCoup" id="C8VDQ4">
    <property type="interactions" value="11"/>
</dbReference>
<dbReference type="STRING" id="227321.C8VDQ4"/>
<dbReference type="EnsemblFungi" id="CBF80101">
    <property type="protein sequence ID" value="CBF80101"/>
    <property type="gene ID" value="ANIA_11010"/>
</dbReference>
<dbReference type="KEGG" id="ani:ANIA_11010"/>
<dbReference type="VEuPathDB" id="FungiDB:AN11010"/>
<dbReference type="eggNOG" id="KOG4347">
    <property type="taxonomic scope" value="Eukaryota"/>
</dbReference>
<dbReference type="HOGENOM" id="CLU_003538_1_0_1"/>
<dbReference type="InParanoid" id="C8VDQ4"/>
<dbReference type="OMA" id="IYMSETQ"/>
<dbReference type="OrthoDB" id="17687at2759"/>
<dbReference type="Proteomes" id="UP000000560">
    <property type="component" value="Chromosome IV"/>
</dbReference>
<dbReference type="GO" id="GO:0005096">
    <property type="term" value="F:GTPase activator activity"/>
    <property type="evidence" value="ECO:0000318"/>
    <property type="project" value="GO_Central"/>
</dbReference>
<dbReference type="FunFam" id="1.10.472.80:FF:000021">
    <property type="entry name" value="GTPase activating protein (Gyp2)"/>
    <property type="match status" value="1"/>
</dbReference>
<dbReference type="FunFam" id="1.10.8.270:FF:000015">
    <property type="entry name" value="GTPase activating protein (Gyp2)"/>
    <property type="match status" value="1"/>
</dbReference>
<dbReference type="Gene3D" id="1.10.238.10">
    <property type="entry name" value="EF-hand"/>
    <property type="match status" value="1"/>
</dbReference>
<dbReference type="Gene3D" id="1.10.8.270">
    <property type="entry name" value="putative rabgap domain of human tbc1 domain family member 14 like domains"/>
    <property type="match status" value="1"/>
</dbReference>
<dbReference type="Gene3D" id="1.10.472.80">
    <property type="entry name" value="Ypt/Rab-GAP domain of gyp1p, domain 3"/>
    <property type="match status" value="1"/>
</dbReference>
<dbReference type="InterPro" id="IPR011992">
    <property type="entry name" value="EF-hand-dom_pair"/>
</dbReference>
<dbReference type="InterPro" id="IPR000195">
    <property type="entry name" value="Rab-GAP-TBC_dom"/>
</dbReference>
<dbReference type="InterPro" id="IPR035969">
    <property type="entry name" value="Rab-GAP_TBC_sf"/>
</dbReference>
<dbReference type="InterPro" id="IPR050302">
    <property type="entry name" value="Rab_GAP_TBC_domain"/>
</dbReference>
<dbReference type="PANTHER" id="PTHR47219">
    <property type="entry name" value="RAB GTPASE-ACTIVATING PROTEIN 1-LIKE"/>
    <property type="match status" value="1"/>
</dbReference>
<dbReference type="PANTHER" id="PTHR47219:SF20">
    <property type="entry name" value="TBC1 DOMAIN FAMILY MEMBER 2B"/>
    <property type="match status" value="1"/>
</dbReference>
<dbReference type="Pfam" id="PF00566">
    <property type="entry name" value="RabGAP-TBC"/>
    <property type="match status" value="1"/>
</dbReference>
<dbReference type="SMART" id="SM00164">
    <property type="entry name" value="TBC"/>
    <property type="match status" value="1"/>
</dbReference>
<dbReference type="SUPFAM" id="SSF47473">
    <property type="entry name" value="EF-hand"/>
    <property type="match status" value="1"/>
</dbReference>
<dbReference type="SUPFAM" id="SSF47923">
    <property type="entry name" value="Ypt/Rab-GAP domain of gyp1p"/>
    <property type="match status" value="2"/>
</dbReference>
<dbReference type="PROSITE" id="PS50086">
    <property type="entry name" value="TBC_RABGAP"/>
    <property type="match status" value="1"/>
</dbReference>
<protein>
    <recommendedName>
        <fullName>Putative GTPase-activating protein AN11010</fullName>
    </recommendedName>
</protein>